<keyword id="KW-0963">Cytoplasm</keyword>
<keyword id="KW-0251">Elongation factor</keyword>
<keyword id="KW-0342">GTP-binding</keyword>
<keyword id="KW-0547">Nucleotide-binding</keyword>
<keyword id="KW-0648">Protein biosynthesis</keyword>
<keyword id="KW-1185">Reference proteome</keyword>
<dbReference type="EMBL" id="AE017333">
    <property type="protein sequence ID" value="AAU39104.1"/>
    <property type="molecule type" value="Genomic_DNA"/>
</dbReference>
<dbReference type="EMBL" id="CP000002">
    <property type="protein sequence ID" value="AAU21759.1"/>
    <property type="molecule type" value="Genomic_DNA"/>
</dbReference>
<dbReference type="RefSeq" id="WP_003178319.1">
    <property type="nucleotide sequence ID" value="NC_006322.1"/>
</dbReference>
<dbReference type="SMR" id="Q65PB0"/>
<dbReference type="STRING" id="279010.BL01057"/>
<dbReference type="GeneID" id="92858906"/>
<dbReference type="KEGG" id="bld:BLi00130"/>
<dbReference type="KEGG" id="bli:BL01057"/>
<dbReference type="PATRIC" id="fig|279010.13.peg.120"/>
<dbReference type="eggNOG" id="COG0480">
    <property type="taxonomic scope" value="Bacteria"/>
</dbReference>
<dbReference type="HOGENOM" id="CLU_002794_4_1_9"/>
<dbReference type="Proteomes" id="UP000000606">
    <property type="component" value="Chromosome"/>
</dbReference>
<dbReference type="GO" id="GO:0005737">
    <property type="term" value="C:cytoplasm"/>
    <property type="evidence" value="ECO:0007669"/>
    <property type="project" value="UniProtKB-SubCell"/>
</dbReference>
<dbReference type="GO" id="GO:0005525">
    <property type="term" value="F:GTP binding"/>
    <property type="evidence" value="ECO:0007669"/>
    <property type="project" value="UniProtKB-UniRule"/>
</dbReference>
<dbReference type="GO" id="GO:0003924">
    <property type="term" value="F:GTPase activity"/>
    <property type="evidence" value="ECO:0007669"/>
    <property type="project" value="InterPro"/>
</dbReference>
<dbReference type="GO" id="GO:0003746">
    <property type="term" value="F:translation elongation factor activity"/>
    <property type="evidence" value="ECO:0007669"/>
    <property type="project" value="UniProtKB-UniRule"/>
</dbReference>
<dbReference type="GO" id="GO:0032790">
    <property type="term" value="P:ribosome disassembly"/>
    <property type="evidence" value="ECO:0007669"/>
    <property type="project" value="TreeGrafter"/>
</dbReference>
<dbReference type="CDD" id="cd01886">
    <property type="entry name" value="EF-G"/>
    <property type="match status" value="1"/>
</dbReference>
<dbReference type="CDD" id="cd16262">
    <property type="entry name" value="EFG_III"/>
    <property type="match status" value="1"/>
</dbReference>
<dbReference type="CDD" id="cd01434">
    <property type="entry name" value="EFG_mtEFG1_IV"/>
    <property type="match status" value="1"/>
</dbReference>
<dbReference type="CDD" id="cd03713">
    <property type="entry name" value="EFG_mtEFG_C"/>
    <property type="match status" value="1"/>
</dbReference>
<dbReference type="CDD" id="cd04088">
    <property type="entry name" value="EFG_mtEFG_II"/>
    <property type="match status" value="1"/>
</dbReference>
<dbReference type="FunFam" id="2.40.30.10:FF:000006">
    <property type="entry name" value="Elongation factor G"/>
    <property type="match status" value="1"/>
</dbReference>
<dbReference type="FunFam" id="3.30.230.10:FF:000003">
    <property type="entry name" value="Elongation factor G"/>
    <property type="match status" value="1"/>
</dbReference>
<dbReference type="FunFam" id="3.30.70.240:FF:000001">
    <property type="entry name" value="Elongation factor G"/>
    <property type="match status" value="1"/>
</dbReference>
<dbReference type="FunFam" id="3.30.70.870:FF:000001">
    <property type="entry name" value="Elongation factor G"/>
    <property type="match status" value="1"/>
</dbReference>
<dbReference type="FunFam" id="3.40.50.300:FF:000029">
    <property type="entry name" value="Elongation factor G"/>
    <property type="match status" value="1"/>
</dbReference>
<dbReference type="Gene3D" id="3.30.230.10">
    <property type="match status" value="1"/>
</dbReference>
<dbReference type="Gene3D" id="3.30.70.240">
    <property type="match status" value="1"/>
</dbReference>
<dbReference type="Gene3D" id="3.30.70.870">
    <property type="entry name" value="Elongation Factor G (Translational Gtpase), domain 3"/>
    <property type="match status" value="1"/>
</dbReference>
<dbReference type="Gene3D" id="3.40.50.300">
    <property type="entry name" value="P-loop containing nucleotide triphosphate hydrolases"/>
    <property type="match status" value="1"/>
</dbReference>
<dbReference type="Gene3D" id="2.40.30.10">
    <property type="entry name" value="Translation factors"/>
    <property type="match status" value="1"/>
</dbReference>
<dbReference type="HAMAP" id="MF_00054_B">
    <property type="entry name" value="EF_G_EF_2_B"/>
    <property type="match status" value="1"/>
</dbReference>
<dbReference type="InterPro" id="IPR041095">
    <property type="entry name" value="EFG_II"/>
</dbReference>
<dbReference type="InterPro" id="IPR009022">
    <property type="entry name" value="EFG_III"/>
</dbReference>
<dbReference type="InterPro" id="IPR035647">
    <property type="entry name" value="EFG_III/V"/>
</dbReference>
<dbReference type="InterPro" id="IPR047872">
    <property type="entry name" value="EFG_IV"/>
</dbReference>
<dbReference type="InterPro" id="IPR035649">
    <property type="entry name" value="EFG_V"/>
</dbReference>
<dbReference type="InterPro" id="IPR000640">
    <property type="entry name" value="EFG_V-like"/>
</dbReference>
<dbReference type="InterPro" id="IPR004161">
    <property type="entry name" value="EFTu-like_2"/>
</dbReference>
<dbReference type="InterPro" id="IPR031157">
    <property type="entry name" value="G_TR_CS"/>
</dbReference>
<dbReference type="InterPro" id="IPR027417">
    <property type="entry name" value="P-loop_NTPase"/>
</dbReference>
<dbReference type="InterPro" id="IPR020568">
    <property type="entry name" value="Ribosomal_Su5_D2-typ_SF"/>
</dbReference>
<dbReference type="InterPro" id="IPR014721">
    <property type="entry name" value="Ribsml_uS5_D2-typ_fold_subgr"/>
</dbReference>
<dbReference type="InterPro" id="IPR005225">
    <property type="entry name" value="Small_GTP-bd"/>
</dbReference>
<dbReference type="InterPro" id="IPR000795">
    <property type="entry name" value="T_Tr_GTP-bd_dom"/>
</dbReference>
<dbReference type="InterPro" id="IPR009000">
    <property type="entry name" value="Transl_B-barrel_sf"/>
</dbReference>
<dbReference type="InterPro" id="IPR004540">
    <property type="entry name" value="Transl_elong_EFG/EF2"/>
</dbReference>
<dbReference type="InterPro" id="IPR005517">
    <property type="entry name" value="Transl_elong_EFG/EF2_IV"/>
</dbReference>
<dbReference type="NCBIfam" id="TIGR00484">
    <property type="entry name" value="EF-G"/>
    <property type="match status" value="1"/>
</dbReference>
<dbReference type="NCBIfam" id="NF009379">
    <property type="entry name" value="PRK12740.1-3"/>
    <property type="match status" value="1"/>
</dbReference>
<dbReference type="NCBIfam" id="NF009381">
    <property type="entry name" value="PRK12740.1-5"/>
    <property type="match status" value="1"/>
</dbReference>
<dbReference type="NCBIfam" id="TIGR00231">
    <property type="entry name" value="small_GTP"/>
    <property type="match status" value="1"/>
</dbReference>
<dbReference type="PANTHER" id="PTHR43261:SF1">
    <property type="entry name" value="RIBOSOME-RELEASING FACTOR 2, MITOCHONDRIAL"/>
    <property type="match status" value="1"/>
</dbReference>
<dbReference type="PANTHER" id="PTHR43261">
    <property type="entry name" value="TRANSLATION ELONGATION FACTOR G-RELATED"/>
    <property type="match status" value="1"/>
</dbReference>
<dbReference type="Pfam" id="PF00679">
    <property type="entry name" value="EFG_C"/>
    <property type="match status" value="1"/>
</dbReference>
<dbReference type="Pfam" id="PF14492">
    <property type="entry name" value="EFG_III"/>
    <property type="match status" value="1"/>
</dbReference>
<dbReference type="Pfam" id="PF03764">
    <property type="entry name" value="EFG_IV"/>
    <property type="match status" value="1"/>
</dbReference>
<dbReference type="Pfam" id="PF00009">
    <property type="entry name" value="GTP_EFTU"/>
    <property type="match status" value="1"/>
</dbReference>
<dbReference type="Pfam" id="PF03144">
    <property type="entry name" value="GTP_EFTU_D2"/>
    <property type="match status" value="1"/>
</dbReference>
<dbReference type="PRINTS" id="PR00315">
    <property type="entry name" value="ELONGATNFCT"/>
</dbReference>
<dbReference type="SMART" id="SM00838">
    <property type="entry name" value="EFG_C"/>
    <property type="match status" value="1"/>
</dbReference>
<dbReference type="SMART" id="SM00889">
    <property type="entry name" value="EFG_IV"/>
    <property type="match status" value="1"/>
</dbReference>
<dbReference type="SUPFAM" id="SSF54980">
    <property type="entry name" value="EF-G C-terminal domain-like"/>
    <property type="match status" value="2"/>
</dbReference>
<dbReference type="SUPFAM" id="SSF52540">
    <property type="entry name" value="P-loop containing nucleoside triphosphate hydrolases"/>
    <property type="match status" value="1"/>
</dbReference>
<dbReference type="SUPFAM" id="SSF54211">
    <property type="entry name" value="Ribosomal protein S5 domain 2-like"/>
    <property type="match status" value="1"/>
</dbReference>
<dbReference type="SUPFAM" id="SSF50447">
    <property type="entry name" value="Translation proteins"/>
    <property type="match status" value="1"/>
</dbReference>
<dbReference type="PROSITE" id="PS00301">
    <property type="entry name" value="G_TR_1"/>
    <property type="match status" value="1"/>
</dbReference>
<dbReference type="PROSITE" id="PS51722">
    <property type="entry name" value="G_TR_2"/>
    <property type="match status" value="1"/>
</dbReference>
<organism>
    <name type="scientific">Bacillus licheniformis (strain ATCC 14580 / DSM 13 / JCM 2505 / CCUG 7422 / NBRC 12200 / NCIMB 9375 / NCTC 10341 / NRRL NRS-1264 / Gibson 46)</name>
    <dbReference type="NCBI Taxonomy" id="279010"/>
    <lineage>
        <taxon>Bacteria</taxon>
        <taxon>Bacillati</taxon>
        <taxon>Bacillota</taxon>
        <taxon>Bacilli</taxon>
        <taxon>Bacillales</taxon>
        <taxon>Bacillaceae</taxon>
        <taxon>Bacillus</taxon>
    </lineage>
</organism>
<reference key="1">
    <citation type="journal article" date="2004" name="J. Mol. Microbiol. Biotechnol.">
        <title>The complete genome sequence of Bacillus licheniformis DSM13, an organism with great industrial potential.</title>
        <authorList>
            <person name="Veith B."/>
            <person name="Herzberg C."/>
            <person name="Steckel S."/>
            <person name="Feesche J."/>
            <person name="Maurer K.H."/>
            <person name="Ehrenreich P."/>
            <person name="Baeumer S."/>
            <person name="Henne A."/>
            <person name="Liesegang H."/>
            <person name="Merkl R."/>
            <person name="Ehrenreich A."/>
            <person name="Gottschalk G."/>
        </authorList>
    </citation>
    <scope>NUCLEOTIDE SEQUENCE [LARGE SCALE GENOMIC DNA]</scope>
    <source>
        <strain>ATCC 14580 / DSM 13 / JCM 2505 / CCUG 7422 / NBRC 12200 / NCIMB 9375 / NCTC 10341 / NRRL NRS-1264 / Gibson 46</strain>
    </source>
</reference>
<reference key="2">
    <citation type="journal article" date="2004" name="Genome Biol.">
        <title>Complete genome sequence of the industrial bacterium Bacillus licheniformis and comparisons with closely related Bacillus species.</title>
        <authorList>
            <person name="Rey M.W."/>
            <person name="Ramaiya P."/>
            <person name="Nelson B.A."/>
            <person name="Brody-Karpin S.D."/>
            <person name="Zaretsky E.J."/>
            <person name="Tang M."/>
            <person name="Lopez de Leon A."/>
            <person name="Xiang H."/>
            <person name="Gusti V."/>
            <person name="Clausen I.G."/>
            <person name="Olsen P.B."/>
            <person name="Rasmussen M.D."/>
            <person name="Andersen J.T."/>
            <person name="Joergensen P.L."/>
            <person name="Larsen T.S."/>
            <person name="Sorokin A."/>
            <person name="Bolotin A."/>
            <person name="Lapidus A."/>
            <person name="Galleron N."/>
            <person name="Ehrlich S.D."/>
            <person name="Berka R.M."/>
        </authorList>
    </citation>
    <scope>NUCLEOTIDE SEQUENCE [LARGE SCALE GENOMIC DNA]</scope>
    <source>
        <strain>ATCC 14580 / DSM 13 / JCM 2505 / CCUG 7422 / NBRC 12200 / NCIMB 9375 / NCTC 10341 / NRRL NRS-1264 / Gibson 46</strain>
    </source>
</reference>
<evidence type="ECO:0000255" key="1">
    <source>
        <dbReference type="HAMAP-Rule" id="MF_00054"/>
    </source>
</evidence>
<sequence>MAREFSLEKTRNIGIMAHIDAGKTTTTERILFYTGRIHKIGETHEGASQMDWMEQEQERGITITSAATTAQWKGYRVNIIDTPGHVDFTVEVERSLRVLDGAVAVLDAQSGVEPQTETVWRQATTYGVPRIVFVNKMDKTGADFLYSVGTLRDRLEANAHAIQLPIGAEDNFEGIIDLVENVAYYYEDDLGTRSEAREIPAEYKDKAEELRASLIEAVAELDEELMMKYLEGEEITVDELKAAIRKGTCNVEFYPVLCGSAFKNKGVQLVLDAVLDYLPAPTDVPAIKGTLPDSDEEVTRESSDDAPFSALAFKVMTDPYVGKLTFFRVYSGTLDSGSYVRNSTKGKRERVGRILQMHANSREEISTVYAGDIAAAVGLKDTTTGDTLCDEKNLVILESMEFPEPVIHVAIEPKSKADQDKMSTALAKLAEEDPTFRAHTDPETGQTIIGGMGELHLDIIVDRMKREFKVEANVGAPQVAYRETFRASAQVEGKFVRQSGGRGQFGHVWIEFSPNEEGKGFEFENAIVGGVVPREYIPAVQAGLEDALQNGVVAGYPVIDIKAKLFDGSYHDVDSNEMAFKIAASMALKNAASKCNPVILEPISKVEVVIPEEYMGDIMGDITSRRGRVEGMEGRGNAQVVRAMVPLSEMFGYATALRSNTQGRGTFTMVFDHYEEVPKSIADEIIKKNQGE</sequence>
<gene>
    <name evidence="1" type="primary">fusA</name>
    <name type="ordered locus">BLi00130</name>
    <name type="ordered locus">BL01057</name>
</gene>
<comment type="function">
    <text evidence="1">Catalyzes the GTP-dependent ribosomal translocation step during translation elongation. During this step, the ribosome changes from the pre-translocational (PRE) to the post-translocational (POST) state as the newly formed A-site-bound peptidyl-tRNA and P-site-bound deacylated tRNA move to the P and E sites, respectively. Catalyzes the coordinated movement of the two tRNA molecules, the mRNA and conformational changes in the ribosome.</text>
</comment>
<comment type="subcellular location">
    <subcellularLocation>
        <location evidence="1">Cytoplasm</location>
    </subcellularLocation>
</comment>
<comment type="similarity">
    <text evidence="1">Belongs to the TRAFAC class translation factor GTPase superfamily. Classic translation factor GTPase family. EF-G/EF-2 subfamily.</text>
</comment>
<accession>Q65PB0</accession>
<accession>Q62ZP9</accession>
<name>EFG_BACLD</name>
<protein>
    <recommendedName>
        <fullName evidence="1">Elongation factor G</fullName>
        <shortName evidence="1">EF-G</shortName>
    </recommendedName>
</protein>
<proteinExistence type="inferred from homology"/>
<feature type="chain" id="PRO_0000091068" description="Elongation factor G">
    <location>
        <begin position="1"/>
        <end position="692"/>
    </location>
</feature>
<feature type="domain" description="tr-type G">
    <location>
        <begin position="8"/>
        <end position="282"/>
    </location>
</feature>
<feature type="binding site" evidence="1">
    <location>
        <begin position="17"/>
        <end position="24"/>
    </location>
    <ligand>
        <name>GTP</name>
        <dbReference type="ChEBI" id="CHEBI:37565"/>
    </ligand>
</feature>
<feature type="binding site" evidence="1">
    <location>
        <begin position="81"/>
        <end position="85"/>
    </location>
    <ligand>
        <name>GTP</name>
        <dbReference type="ChEBI" id="CHEBI:37565"/>
    </ligand>
</feature>
<feature type="binding site" evidence="1">
    <location>
        <begin position="135"/>
        <end position="138"/>
    </location>
    <ligand>
        <name>GTP</name>
        <dbReference type="ChEBI" id="CHEBI:37565"/>
    </ligand>
</feature>